<proteinExistence type="evidence at protein level"/>
<comment type="function">
    <text evidence="6">Weak inhibitor of trypsin.</text>
</comment>
<comment type="biophysicochemical properties">
    <temperatureDependence>
        <text evidence="7">Thermostable.</text>
    </temperatureDependence>
</comment>
<comment type="alternative products">
    <event type="alternative splicing"/>
    <isoform>
        <id>Q6PSU2-1</id>
        <name>1</name>
        <name>P1</name>
        <sequence type="displayed"/>
    </isoform>
    <isoform>
        <id>Q6PSU2-2</id>
        <name>2</name>
        <name>P2</name>
        <sequence type="described" ref="VSP_038916"/>
    </isoform>
    <isoform>
        <id>Q6PSU2-3</id>
        <name>3</name>
        <name>P3</name>
        <sequence type="described" ref="VSP_038917"/>
    </isoform>
    <isoform>
        <id>Q6PSU2-4</id>
        <name>4</name>
        <name>P4</name>
        <sequence type="described" ref="VSP_038916 VSP_038917"/>
    </isoform>
</comment>
<comment type="tissue specificity">
    <text evidence="4">Expressed in seeds, not expressed in leaves, roots and pegs.</text>
</comment>
<comment type="developmental stage">
    <text evidence="4">Expressed at very low levels in immature seeds and at high levels from 40-75 days after pollination. Expression decreases after 75 days after pollination.</text>
</comment>
<comment type="induction">
    <text evidence="10">Repressed by water stress.</text>
</comment>
<comment type="PTM">
    <text evidence="9">The hydroxyproline modifications determined by mass spectrometry are probably 4-hydroxyproline as determined for other extracellular plant proteins.</text>
</comment>
<comment type="mass spectrometry" mass="18050.0" method="MALDI" evidence="5">
    <text>Isoform 1.</text>
</comment>
<comment type="mass spectrometry" mass="16670.0" method="MALDI" evidence="5">
    <text>Isoform 3.</text>
</comment>
<comment type="allergen">
    <text evidence="7">Causes an allergic reaction in human. Binds to IgE.</text>
</comment>
<comment type="miscellaneous">
    <text evidence="7">Resistant to proteolysis.</text>
</comment>
<comment type="similarity">
    <text evidence="1">Belongs to the 2S seed storage albumins family.</text>
</comment>
<comment type="sequence caution" evidence="20">
    <conflict type="erroneous initiation">
        <sequence resource="EMBL-CDS" id="AAT00598"/>
    </conflict>
    <text>Extended N-terminus.</text>
</comment>
<comment type="sequence caution" evidence="20">
    <conflict type="erroneous initiation">
        <sequence resource="EMBL-CDS" id="AAT00599"/>
    </conflict>
    <text>Extended N-terminus.</text>
</comment>
<comment type="sequence caution" evidence="20">
    <conflict type="erroneous initiation">
        <sequence resource="EMBL-CDS" id="AAU21494"/>
    </conflict>
    <text>Extended N-terminus.</text>
</comment>
<dbReference type="EMBL" id="AY158467">
    <property type="protein sequence ID" value="AAN77576.1"/>
    <property type="molecule type" value="mRNA"/>
</dbReference>
<dbReference type="EMBL" id="AY581853">
    <property type="protein sequence ID" value="AAT00598.1"/>
    <property type="status" value="ALT_INIT"/>
    <property type="molecule type" value="mRNA"/>
</dbReference>
<dbReference type="EMBL" id="AY722689">
    <property type="protein sequence ID" value="AAU21494.1"/>
    <property type="status" value="ALT_INIT"/>
    <property type="molecule type" value="mRNA"/>
</dbReference>
<dbReference type="EMBL" id="EF609644">
    <property type="protein sequence ID" value="ABQ96215.1"/>
    <property type="molecule type" value="Genomic_DNA"/>
</dbReference>
<dbReference type="EMBL" id="AY581854">
    <property type="protein sequence ID" value="AAT00599.1"/>
    <property type="status" value="ALT_INIT"/>
    <property type="molecule type" value="mRNA"/>
</dbReference>
<dbReference type="EMBL" id="EF080817">
    <property type="protein sequence ID" value="ABL14268.1"/>
    <property type="molecule type" value="mRNA"/>
</dbReference>
<dbReference type="EMBL" id="EF695402">
    <property type="protein sequence ID" value="ABS28872.1"/>
    <property type="molecule type" value="Genomic_DNA"/>
</dbReference>
<dbReference type="EMBL" id="FJ713110">
    <property type="protein sequence ID" value="ACN62248.1"/>
    <property type="molecule type" value="Genomic_DNA"/>
</dbReference>
<dbReference type="EMBL" id="AY007229">
    <property type="protein sequence ID" value="AAK96887.1"/>
    <property type="molecule type" value="Genomic_DNA"/>
</dbReference>
<dbReference type="EMBL" id="AF366560">
    <property type="protein sequence ID" value="AAO61750.1"/>
    <property type="molecule type" value="mRNA"/>
</dbReference>
<dbReference type="EMBL" id="AY117434">
    <property type="protein sequence ID" value="AAM78596.1"/>
    <property type="molecule type" value="mRNA"/>
</dbReference>
<dbReference type="RefSeq" id="NP_001392340.1">
    <molecule id="Q6PSU2-1"/>
    <property type="nucleotide sequence ID" value="NM_001405411.1"/>
</dbReference>
<dbReference type="PDB" id="8SHW">
    <property type="method" value="X-ray"/>
    <property type="resolution" value="1.95 A"/>
    <property type="chains" value="B/Q=57-70"/>
</dbReference>
<dbReference type="PDB" id="8SJ6">
    <property type="method" value="X-ray"/>
    <property type="resolution" value="3.97 A"/>
    <property type="chains" value="Q=26-172"/>
</dbReference>
<dbReference type="PDBsum" id="8SHW"/>
<dbReference type="PDBsum" id="8SJ6"/>
<dbReference type="SMR" id="Q6PSU2"/>
<dbReference type="Allergome" id="1081">
    <property type="allergen name" value="Ara h 2.0101"/>
</dbReference>
<dbReference type="Allergome" id="1082">
    <property type="allergen name" value="Ara h 2.0201"/>
</dbReference>
<dbReference type="Allergome" id="51">
    <property type="allergen name" value="Ara h 2"/>
</dbReference>
<dbReference type="ABCD" id="Q6PSU2">
    <property type="antibodies" value="8 sequenced antibodies"/>
</dbReference>
<dbReference type="EnsemblPlants" id="arahy.Tifrunner.gnm2.ann2.Ah18g135300.1">
    <property type="protein sequence ID" value="arahy.Tifrunner.gnm2.ann2.Ah18g135300.1-CDS-1"/>
    <property type="gene ID" value="arahy.Tifrunner.gnm2.ann2.Ah18g135300"/>
</dbReference>
<dbReference type="GeneID" id="112771110"/>
<dbReference type="Gramene" id="arahy.Tifrunner.gnm2.ann2.Ah18g135300.1">
    <property type="protein sequence ID" value="arahy.Tifrunner.gnm2.ann2.Ah18g135300.1-CDS-1"/>
    <property type="gene ID" value="arahy.Tifrunner.gnm2.ann2.Ah18g135300"/>
</dbReference>
<dbReference type="OrthoDB" id="1424936at2759"/>
<dbReference type="GO" id="GO:0019863">
    <property type="term" value="F:IgE binding"/>
    <property type="evidence" value="ECO:0007669"/>
    <property type="project" value="UniProtKB-KW"/>
</dbReference>
<dbReference type="GO" id="GO:0045735">
    <property type="term" value="F:nutrient reservoir activity"/>
    <property type="evidence" value="ECO:0007669"/>
    <property type="project" value="UniProtKB-KW"/>
</dbReference>
<dbReference type="GO" id="GO:0004867">
    <property type="term" value="F:serine-type endopeptidase inhibitor activity"/>
    <property type="evidence" value="ECO:0007669"/>
    <property type="project" value="UniProtKB-KW"/>
</dbReference>
<dbReference type="Gene3D" id="1.10.110.10">
    <property type="entry name" value="Plant lipid-transfer and hydrophobic proteins"/>
    <property type="match status" value="1"/>
</dbReference>
<dbReference type="InterPro" id="IPR036312">
    <property type="entry name" value="Bifun_inhib/LTP/seed_sf"/>
</dbReference>
<dbReference type="InterPro" id="IPR016140">
    <property type="entry name" value="Bifunc_inhib/LTP/seed_store"/>
</dbReference>
<dbReference type="InterPro" id="IPR000617">
    <property type="entry name" value="Napin/2SS/CON"/>
</dbReference>
<dbReference type="PANTHER" id="PTHR35496">
    <property type="entry name" value="2S SEED STORAGE PROTEIN 1-RELATED"/>
    <property type="match status" value="1"/>
</dbReference>
<dbReference type="PANTHER" id="PTHR35496:SF20">
    <property type="entry name" value="2S SEED STORAGE PROTEIN 1-RELATED"/>
    <property type="match status" value="1"/>
</dbReference>
<dbReference type="Pfam" id="PF00234">
    <property type="entry name" value="Tryp_alpha_amyl"/>
    <property type="match status" value="1"/>
</dbReference>
<dbReference type="SMART" id="SM00499">
    <property type="entry name" value="AAI"/>
    <property type="match status" value="1"/>
</dbReference>
<dbReference type="SUPFAM" id="SSF47699">
    <property type="entry name" value="Bifunctional inhibitor/lipid-transfer protein/seed storage 2S albumin"/>
    <property type="match status" value="1"/>
</dbReference>
<organism>
    <name type="scientific">Arachis hypogaea</name>
    <name type="common">Peanut</name>
    <dbReference type="NCBI Taxonomy" id="3818"/>
    <lineage>
        <taxon>Eukaryota</taxon>
        <taxon>Viridiplantae</taxon>
        <taxon>Streptophyta</taxon>
        <taxon>Embryophyta</taxon>
        <taxon>Tracheophyta</taxon>
        <taxon>Spermatophyta</taxon>
        <taxon>Magnoliopsida</taxon>
        <taxon>eudicotyledons</taxon>
        <taxon>Gunneridae</taxon>
        <taxon>Pentapetalae</taxon>
        <taxon>rosids</taxon>
        <taxon>fabids</taxon>
        <taxon>Fabales</taxon>
        <taxon>Fabaceae</taxon>
        <taxon>Papilionoideae</taxon>
        <taxon>50 kb inversion clade</taxon>
        <taxon>dalbergioids sensu lato</taxon>
        <taxon>Dalbergieae</taxon>
        <taxon>Pterocarpus clade</taxon>
        <taxon>Arachis</taxon>
    </lineage>
</organism>
<feature type="signal peptide" evidence="5 10">
    <location>
        <begin position="1"/>
        <end position="21"/>
    </location>
</feature>
<feature type="chain" id="PRO_0000370687" description="Conglutin-7" evidence="5 10">
    <location>
        <begin position="22"/>
        <end position="172"/>
    </location>
</feature>
<feature type="region of interest" description="Disordered" evidence="2">
    <location>
        <begin position="54"/>
        <end position="98"/>
    </location>
</feature>
<feature type="compositionally biased region" description="Low complexity" evidence="2">
    <location>
        <begin position="62"/>
        <end position="76"/>
    </location>
</feature>
<feature type="compositionally biased region" description="Basic and acidic residues" evidence="2">
    <location>
        <begin position="77"/>
        <end position="98"/>
    </location>
</feature>
<feature type="modified residue" description="4-hydroxyproline" evidence="9">
    <location>
        <position position="67"/>
    </location>
</feature>
<feature type="modified residue" description="4-hydroxyproline" evidence="9">
    <location>
        <position position="74"/>
    </location>
</feature>
<feature type="modified residue" description="4-hydroxyproline" evidence="9">
    <location>
        <position position="86"/>
    </location>
</feature>
<feature type="disulfide bond" evidence="9">
    <location>
        <begin position="33"/>
        <end position="116"/>
    </location>
</feature>
<feature type="disulfide bond" description="Or C-45 with C-104" evidence="9">
    <location>
        <begin position="45"/>
        <end position="103"/>
    </location>
</feature>
<feature type="disulfide bond" description="Or C-103 with C-152" evidence="9">
    <location>
        <begin position="104"/>
        <end position="152"/>
    </location>
</feature>
<feature type="disulfide bond" evidence="9">
    <location>
        <begin position="118"/>
        <end position="160"/>
    </location>
</feature>
<feature type="splice variant" id="VSP_038916" description="In isoform 2 and isoform 4." evidence="16 18 19">
    <location>
        <begin position="76"/>
        <end position="87"/>
    </location>
</feature>
<feature type="splice variant" id="VSP_038917" description="In isoform 3 and isoform 4." evidence="15">
    <original>DRY</original>
    <variation>D</variation>
    <location>
        <begin position="170"/>
        <end position="172"/>
    </location>
</feature>
<feature type="sequence conflict" description="In Ref. 7; ACN62248." evidence="20" ref="7">
    <location>
        <begin position="2"/>
        <end position="3"/>
    </location>
</feature>
<feature type="sequence conflict" description="In Ref. 10; AAM78596." evidence="20" ref="10">
    <original>L</original>
    <variation>P</variation>
    <location>
        <position position="10"/>
    </location>
</feature>
<feature type="sequence conflict" description="In Ref. 4; AAT00599." evidence="20" ref="4">
    <original>L</original>
    <variation>F</variation>
    <location>
        <position position="27"/>
    </location>
</feature>
<feature type="sequence conflict" description="In Ref. 2; AAU21494, 4; AAT00599, 7; ACN62248 and 8; AAK96887." evidence="20" ref="2 4 7 8">
    <original>G</original>
    <variation>E</variation>
    <location>
        <position position="61"/>
    </location>
</feature>
<feature type="sequence conflict" description="In Ref. 5; ABL14268." evidence="20" ref="5">
    <location>
        <begin position="65"/>
        <end position="78"/>
    </location>
</feature>
<feature type="sequence conflict" description="In Ref. 2; AAU21494, 4; AAT00599, 7; ACN62248 and 8; AAK96887." evidence="20" ref="2 4 7 8">
    <original>E</original>
    <variation>D</variation>
    <location>
        <position position="163"/>
    </location>
</feature>
<protein>
    <recommendedName>
        <fullName evidence="17 24">Conglutin-7</fullName>
    </recommendedName>
    <alternativeName>
        <fullName evidence="17 24">2S protein 1</fullName>
    </alternativeName>
    <alternativeName>
        <fullName evidence="17 24">Seed storage protein SSP1</fullName>
    </alternativeName>
    <alternativeName>
        <fullName evidence="17 24">Seed storage protein SSP2</fullName>
    </alternativeName>
    <allergenName>Ara h 2</allergenName>
</protein>
<name>CONG7_ARAHY</name>
<evidence type="ECO:0000255" key="1"/>
<evidence type="ECO:0000256" key="2">
    <source>
        <dbReference type="SAM" id="MobiDB-lite"/>
    </source>
</evidence>
<evidence type="ECO:0000269" key="3">
    <source>
    </source>
</evidence>
<evidence type="ECO:0000269" key="4">
    <source>
    </source>
</evidence>
<evidence type="ECO:0000269" key="5">
    <source>
    </source>
</evidence>
<evidence type="ECO:0000269" key="6">
    <source>
    </source>
</evidence>
<evidence type="ECO:0000269" key="7">
    <source>
    </source>
</evidence>
<evidence type="ECO:0000269" key="8">
    <source>
    </source>
</evidence>
<evidence type="ECO:0000269" key="9">
    <source>
    </source>
</evidence>
<evidence type="ECO:0000269" key="10">
    <source ref="12"/>
</evidence>
<evidence type="ECO:0000269" key="11">
    <source ref="2"/>
</evidence>
<evidence type="ECO:0000269" key="12">
    <source ref="4"/>
</evidence>
<evidence type="ECO:0000269" key="13">
    <source ref="5"/>
</evidence>
<evidence type="ECO:0000269" key="14">
    <source ref="6"/>
</evidence>
<evidence type="ECO:0000303" key="15">
    <source>
    </source>
</evidence>
<evidence type="ECO:0000303" key="16">
    <source>
    </source>
</evidence>
<evidence type="ECO:0000303" key="17">
    <source>
    </source>
</evidence>
<evidence type="ECO:0000303" key="18">
    <source ref="2"/>
</evidence>
<evidence type="ECO:0000303" key="19">
    <source ref="4"/>
</evidence>
<evidence type="ECO:0000305" key="20"/>
<evidence type="ECO:0000312" key="21">
    <source>
        <dbReference type="EMBL" id="AAK96887.1"/>
    </source>
</evidence>
<evidence type="ECO:0000312" key="22">
    <source>
        <dbReference type="EMBL" id="AAN77576.1"/>
    </source>
</evidence>
<evidence type="ECO:0000312" key="23">
    <source>
        <dbReference type="EMBL" id="AAO61750.1"/>
    </source>
</evidence>
<evidence type="ECO:0000312" key="24">
    <source>
        <dbReference type="EMBL" id="AAT00598.1"/>
    </source>
</evidence>
<evidence type="ECO:0000312" key="25">
    <source>
        <dbReference type="EMBL" id="AAT00599.1"/>
    </source>
</evidence>
<evidence type="ECO:0000312" key="26">
    <source>
        <dbReference type="EMBL" id="ABQ96215.1"/>
    </source>
</evidence>
<reference evidence="20 22" key="1">
    <citation type="journal article" date="2003" name="Int. Arch. Allergy Immunol.">
        <title>Isolation and characterization of two complete Ara h 2 isoforms cDNA.</title>
        <authorList>
            <person name="Chatel J.-M."/>
            <person name="Bernard H."/>
            <person name="Orson F.M."/>
        </authorList>
    </citation>
    <scope>NUCLEOTIDE SEQUENCE [MRNA] (ISOFORMS 1 AND 2)</scope>
    <scope>PROTEIN SEQUENCE OF 22-31</scope>
    <scope>MASS SPECTROMETRY</scope>
</reference>
<reference evidence="24" key="2">
    <citation type="journal article" date="2005" name="Plant Sci.">
        <title>Isolation of peanut genes encoding arachins and conglutins by expressed sequence tags.</title>
        <authorList>
            <person name="Yan Y.-S."/>
            <person name="Lin X.-D."/>
            <person name="Zhang Y.-S."/>
            <person name="Wang L."/>
            <person name="Wu K."/>
            <person name="Huang S.-Z."/>
        </authorList>
        <dbReference type="AGRICOLA" id="IND43739496"/>
    </citation>
    <scope>NUCLEOTIDE SEQUENCE [MRNA] (ISOFORMS 1 AND 2)</scope>
    <source>
        <strain evidence="11">cv. Shanyou 523</strain>
        <tissue evidence="11">Cotyledon</tissue>
    </source>
</reference>
<reference evidence="26" key="3">
    <citation type="journal article" date="2006" name="Mol. Genet. Genomics">
        <title>Chromosomal and phylogenetic context for conglutin genes in Arachis based on genomic sequence.</title>
        <authorList>
            <person name="Ramos M.L."/>
            <person name="Fleming G."/>
            <person name="Chu Y."/>
            <person name="Akiyama Y."/>
            <person name="Gallo M."/>
            <person name="Ozias-Akins P."/>
        </authorList>
    </citation>
    <scope>NUCLEOTIDE SEQUENCE [GENOMIC DNA]</scope>
    <source>
        <strain evidence="8">cv. F78-1339</strain>
    </source>
</reference>
<reference evidence="20 25" key="4">
    <citation type="submission" date="2004-03" db="EMBL/GenBank/DDBJ databases">
        <title>cDNA cloning of peanut seed storage protein.</title>
        <authorList>
            <person name="Yan Y.-S."/>
            <person name="Wang L."/>
            <person name="Liao B."/>
            <person name="Li H."/>
            <person name="Lin X.-D."/>
            <person name="Huang S.-Z."/>
        </authorList>
    </citation>
    <scope>NUCLEOTIDE SEQUENCE [MRNA] (ISOFORM 2)</scope>
    <source>
        <strain evidence="12">cv. Shanyou 523</strain>
    </source>
</reference>
<reference evidence="20 25" key="5">
    <citation type="submission" date="2006-10" db="EMBL/GenBank/DDBJ databases">
        <title>Isolation of peanut genes encoding seed storage proteins and stress proteins from developing cotyledons by expressed sequence tags.</title>
        <authorList>
            <person name="Fu G."/>
            <person name="Yan Y.-S."/>
            <person name="Wang L."/>
            <person name="Zhong Y."/>
            <person name="Huang S.-Z."/>
        </authorList>
    </citation>
    <scope>NUCLEOTIDE SEQUENCE [MRNA] (ISOFORM 1)</scope>
    <source>
        <strain evidence="13">cv. Shanyou 523</strain>
    </source>
</reference>
<reference evidence="20 25" key="6">
    <citation type="submission" date="2007-06" db="EMBL/GenBank/DDBJ databases">
        <title>Cloning and characterization of four genes encoding peanut seed oleosins.</title>
        <authorList>
            <person name="Li C."/>
            <person name="Fu G."/>
            <person name="Zhong Y."/>
            <person name="Yan Y."/>
            <person name="Wang L."/>
            <person name="Huang S."/>
        </authorList>
    </citation>
    <scope>NUCLEOTIDE SEQUENCE [GENOMIC DNA]</scope>
    <source>
        <strain evidence="14">cv. Shanyou 523</strain>
    </source>
</reference>
<reference evidence="20 25" key="7">
    <citation type="submission" date="2009-02" db="EMBL/GenBank/DDBJ databases">
        <title>Proteolytical processing of Ara h 2 into mature form.</title>
        <authorList>
            <person name="Radosavljevic J."/>
            <person name="Dobrijevic D."/>
            <person name="Blanusa M."/>
            <person name="Jadranin M."/>
            <person name="Cirkovic Velickovic T."/>
        </authorList>
    </citation>
    <scope>NUCLEOTIDE SEQUENCE [GENOMIC DNA]</scope>
</reference>
<reference evidence="21" key="8">
    <citation type="journal article" date="2001" name="J. Allergy Clin. Immunol.">
        <title>Isolation and molecular characterization of the first genomic clone of a major peanut allergen, Ara h 2.</title>
        <authorList>
            <person name="Viquez O.M."/>
            <person name="Summer C.G."/>
            <person name="Dodo H.W."/>
        </authorList>
    </citation>
    <scope>NUCLEOTIDE SEQUENCE [GENOMIC DNA] OF 1-168</scope>
    <source>
        <strain evidence="3">cv. F78-1339</strain>
        <tissue evidence="3">Seed</tissue>
    </source>
</reference>
<reference evidence="20 23" key="9">
    <citation type="journal article" date="2002" name="Theor. Appl. Genet.">
        <title>Seed-specific, developmentally regulated genes of peanut.</title>
        <authorList>
            <person name="Paik-Ro O.G."/>
            <person name="Seib J.C."/>
            <person name="Smith R.L."/>
        </authorList>
    </citation>
    <scope>NUCLEOTIDE SEQUENCE [MRNA] OF 3-168 (ISOFORMS 1 AND 3)</scope>
    <scope>TISSUE SPECIFICITY</scope>
    <scope>DEVELOPMENTAL STAGE</scope>
    <source>
        <strain evidence="4">cv. FL435</strain>
        <tissue evidence="23">Seed</tissue>
    </source>
</reference>
<reference evidence="20 25" key="10">
    <citation type="submission" date="2002-06" db="EMBL/GenBank/DDBJ databases">
        <title>Re-investigation of the major peanut allergen Arah2 on the molecular level.</title>
        <authorList>
            <person name="Becker W.-M."/>
            <person name="Suhr M."/>
            <person name="Lindner B."/>
            <person name="Wicklein D."/>
            <person name="Lepp U."/>
        </authorList>
    </citation>
    <scope>NUCLEOTIDE SEQUENCE [MRNA] OF 4-172 (ISOFORM 1)</scope>
</reference>
<reference key="11">
    <citation type="journal article" date="2010" name="Protein Sci.">
        <title>Primary sequence and site-selective hydroxylation of prolines in isoforms of a major peanut allergen protein Ara h 2.</title>
        <authorList>
            <person name="Li J."/>
            <person name="Shefcheck K."/>
            <person name="Callahan J."/>
            <person name="Fenselau C."/>
        </authorList>
    </citation>
    <scope>PROTEIN SEQUENCE OF 22-172 (ISOFORMS 1; 2; 3 AND 4)</scope>
    <scope>HYDROXYLATION AT PRO-67; PRO-74 AND PRO-86</scope>
    <scope>DISULFIDE BONDS</scope>
    <scope>IDENTIFICATION BY MASS SPECTROMETRY</scope>
</reference>
<reference evidence="20 25" key="12">
    <citation type="submission" date="2007-03" db="UniProtKB">
        <title>Suppression of seed storage proteins upon water stress in Arachis hypogea var. M-13 seeds.</title>
        <authorList>
            <person name="Katam R."/>
            <person name="Vasanthaiah H.K.N."/>
            <person name="Basha S.M."/>
            <person name="McClung S."/>
        </authorList>
    </citation>
    <scope>PROTEIN SEQUENCE OF 22-33; 117-131; 147-155 AND 160-169</scope>
    <scope>REPRESSION BY WATER STRESS</scope>
    <source>
        <strain evidence="10">cv. M13</strain>
        <tissue evidence="10">Seed</tissue>
    </source>
</reference>
<reference evidence="20" key="13">
    <citation type="journal article" date="2006" name="Biochem. J.">
        <title>Structure and stability of 2S albumin-type peanut allergens: implications for the severity of peanut allergic reactions.</title>
        <authorList>
            <person name="Lehmann K."/>
            <person name="Schweimer K."/>
            <person name="Reese G."/>
            <person name="Randow S."/>
            <person name="Suhr M."/>
            <person name="Becker W.-M."/>
            <person name="Vieths S."/>
            <person name="Roesch P."/>
        </authorList>
    </citation>
    <scope>PROTEIN SEQUENCE OF 26-31 AND 93-99</scope>
    <scope>ALLERGEN</scope>
    <scope>RESISTANCE TO HEAT AND PROTEOLYSIS</scope>
</reference>
<reference evidence="20" key="14">
    <citation type="journal article" date="2003" name="J. Allergy Clin. Immunol.">
        <title>The major peanut allergen, Ara h 2, functions as a trypsin inhibitor, and roasting enhances this function.</title>
        <authorList>
            <person name="Maleki S.J."/>
            <person name="Viquez O.M."/>
            <person name="Jacks T."/>
            <person name="Dodo H.W."/>
            <person name="Champagne E.T."/>
            <person name="Chung S.-Y."/>
            <person name="Landry S.J."/>
        </authorList>
    </citation>
    <scope>FUNCTION</scope>
</reference>
<keyword id="KW-0002">3D-structure</keyword>
<keyword id="KW-0020">Allergen</keyword>
<keyword id="KW-0025">Alternative splicing</keyword>
<keyword id="KW-0903">Direct protein sequencing</keyword>
<keyword id="KW-1015">Disulfide bond</keyword>
<keyword id="KW-0379">Hydroxylation</keyword>
<keyword id="KW-0389">IgE-binding protein</keyword>
<keyword id="KW-0646">Protease inhibitor</keyword>
<keyword id="KW-0708">Seed storage protein</keyword>
<keyword id="KW-0722">Serine protease inhibitor</keyword>
<keyword id="KW-0732">Signal</keyword>
<keyword id="KW-0758">Storage protein</keyword>
<sequence length="172" mass="20114">MAKLTILVALALFLLAAHASARQQWELQGDRRCQSQLERANLRPCEQHLMQKIQRDEDSYGRDPYSPSQDPYSPSQDPDRRDPYSPSPYDRRGAGSSQHQERCCNELNEFENNQRCMCEALQQIMENQSDRLQGRQQEQQFKRELRNLPQQCGLRAPQRCDLEVESGGRDRY</sequence>
<accession>Q6PSU2</accession>
<accession>A1DZE8</accession>
<accession>A5Z1R1</accession>
<accession>C0LJJ1</accession>
<accession>Q647H0</accession>
<accession>Q6PSU1</accession>
<accession>Q7Y1C0</accession>
<accession>Q84TU1</accession>
<accession>Q8GV20</accession>
<accession>Q941R0</accession>